<reference key="1">
    <citation type="journal article" date="2000" name="Nature">
        <title>Complete DNA sequence of a serogroup A strain of Neisseria meningitidis Z2491.</title>
        <authorList>
            <person name="Parkhill J."/>
            <person name="Achtman M."/>
            <person name="James K.D."/>
            <person name="Bentley S.D."/>
            <person name="Churcher C.M."/>
            <person name="Klee S.R."/>
            <person name="Morelli G."/>
            <person name="Basham D."/>
            <person name="Brown D."/>
            <person name="Chillingworth T."/>
            <person name="Davies R.M."/>
            <person name="Davis P."/>
            <person name="Devlin K."/>
            <person name="Feltwell T."/>
            <person name="Hamlin N."/>
            <person name="Holroyd S."/>
            <person name="Jagels K."/>
            <person name="Leather S."/>
            <person name="Moule S."/>
            <person name="Mungall K.L."/>
            <person name="Quail M.A."/>
            <person name="Rajandream M.A."/>
            <person name="Rutherford K.M."/>
            <person name="Simmonds M."/>
            <person name="Skelton J."/>
            <person name="Whitehead S."/>
            <person name="Spratt B.G."/>
            <person name="Barrell B.G."/>
        </authorList>
    </citation>
    <scope>NUCLEOTIDE SEQUENCE [LARGE SCALE GENOMIC DNA]</scope>
    <source>
        <strain>DSM 15465 / Z2491</strain>
    </source>
</reference>
<dbReference type="EC" id="2.-.-.-"/>
<dbReference type="EMBL" id="AL157959">
    <property type="protein sequence ID" value="CAM07802.1"/>
    <property type="molecule type" value="Genomic_DNA"/>
</dbReference>
<dbReference type="PIR" id="A81971">
    <property type="entry name" value="A81971"/>
</dbReference>
<dbReference type="RefSeq" id="WP_002246454.1">
    <property type="nucleotide sequence ID" value="NC_003116.1"/>
</dbReference>
<dbReference type="SMR" id="P57033"/>
<dbReference type="CAZy" id="GT25">
    <property type="family name" value="Glycosyltransferase Family 25"/>
</dbReference>
<dbReference type="EnsemblBacteria" id="CAM07802">
    <property type="protein sequence ID" value="CAM07802"/>
    <property type="gene ID" value="NMA0525"/>
</dbReference>
<dbReference type="KEGG" id="nma:NMA0525"/>
<dbReference type="HOGENOM" id="CLU_071269_2_1_4"/>
<dbReference type="BRENDA" id="2.4.1.38">
    <property type="organism ID" value="17376"/>
</dbReference>
<dbReference type="UniPathway" id="UPA00501"/>
<dbReference type="UniPathway" id="UPA00820"/>
<dbReference type="Proteomes" id="UP000000626">
    <property type="component" value="Chromosome"/>
</dbReference>
<dbReference type="GO" id="GO:0016757">
    <property type="term" value="F:glycosyltransferase activity"/>
    <property type="evidence" value="ECO:0007669"/>
    <property type="project" value="UniProtKB-KW"/>
</dbReference>
<dbReference type="GO" id="GO:0009103">
    <property type="term" value="P:lipopolysaccharide biosynthetic process"/>
    <property type="evidence" value="ECO:0007669"/>
    <property type="project" value="UniProtKB-KW"/>
</dbReference>
<dbReference type="CDD" id="cd06532">
    <property type="entry name" value="Glyco_transf_25"/>
    <property type="match status" value="1"/>
</dbReference>
<dbReference type="InterPro" id="IPR002654">
    <property type="entry name" value="Glyco_trans_25"/>
</dbReference>
<dbReference type="Pfam" id="PF01755">
    <property type="entry name" value="Glyco_transf_25"/>
    <property type="match status" value="1"/>
</dbReference>
<proteinExistence type="inferred from homology"/>
<keyword id="KW-0328">Glycosyltransferase</keyword>
<keyword id="KW-0448">Lipopolysaccharide biosynthesis</keyword>
<keyword id="KW-0808">Transferase</keyword>
<evidence type="ECO:0000305" key="1"/>
<organism>
    <name type="scientific">Neisseria meningitidis serogroup A / serotype 4A (strain DSM 15465 / Z2491)</name>
    <dbReference type="NCBI Taxonomy" id="122587"/>
    <lineage>
        <taxon>Bacteria</taxon>
        <taxon>Pseudomonadati</taxon>
        <taxon>Pseudomonadota</taxon>
        <taxon>Betaproteobacteria</taxon>
        <taxon>Neisseriales</taxon>
        <taxon>Neisseriaceae</taxon>
        <taxon>Neisseria</taxon>
    </lineage>
</organism>
<sequence length="279" mass="31904">MQNHVISLASAAERRAHITDTFGVRGIPFQFFDALMPSERLEQAMAELVPGLSAHPYLSGVEKACFMSHAVLWKQALDEGLPYIAVFEDDVLLGEGAEKFLAEDAWLQERFDPDSAFIVRLETMFMHVLTSPSGVADYCGRAFPLLESEHWGTAGYIISRKAMWFFLDRFAALPSEGLHPVDWMMFGNPDDRERMPVCQLNPALCAQELHYAKFHDQNSALGSLIEHDRCLNSKQQRRDSPANTFKHRLIRALTKISREREKRRQRREQLIGKIIVPFQ</sequence>
<gene>
    <name type="primary">lgtB</name>
    <name type="ordered locus">NMA0525</name>
</gene>
<feature type="chain" id="PRO_0000216236" description="Lacto-N-neotetraose biosynthesis glycosyltransferase LgtB">
    <location>
        <begin position="1"/>
        <end position="279"/>
    </location>
</feature>
<comment type="function">
    <text>Adds the second galactose to the lacto-N-tetraose chain in lipooligosaccharide (LOS).</text>
</comment>
<comment type="pathway">
    <text>Glycan metabolism; lacto-N-neotetraose biosynthesis.</text>
</comment>
<comment type="pathway">
    <text>Bacterial outer membrane biogenesis; lipooligosaccharide biosynthesis.</text>
</comment>
<comment type="similarity">
    <text evidence="1">Belongs to the glycosyltransferase 25 family.</text>
</comment>
<accession>P57033</accession>
<accession>A1IPY1</accession>
<name>LGTB_NEIMA</name>
<protein>
    <recommendedName>
        <fullName>Lacto-N-neotetraose biosynthesis glycosyltransferase LgtB</fullName>
        <ecNumber>2.-.-.-</ecNumber>
    </recommendedName>
</protein>